<name>MGDG_TOBAC</name>
<feature type="transit peptide" description="Chloroplast" evidence="2">
    <location>
        <begin position="1"/>
        <end position="113"/>
    </location>
</feature>
<feature type="chain" id="PRO_0000349425" description="Probable monogalactosyldiacylglycerol synthase, chloroplastic">
    <location>
        <begin position="114"/>
        <end position="535"/>
    </location>
</feature>
<evidence type="ECO:0000250" key="1"/>
<evidence type="ECO:0000255" key="2"/>
<evidence type="ECO:0000305" key="3"/>
<dbReference type="EC" id="2.4.1.46"/>
<dbReference type="EMBL" id="AB047476">
    <property type="protein sequence ID" value="BAB11980.1"/>
    <property type="molecule type" value="mRNA"/>
</dbReference>
<dbReference type="SMR" id="Q9FZL3"/>
<dbReference type="STRING" id="4097.Q9FZL3"/>
<dbReference type="CAZy" id="GT28">
    <property type="family name" value="Glycosyltransferase Family 28"/>
</dbReference>
<dbReference type="PaxDb" id="4097-Q9FZL3"/>
<dbReference type="KEGG" id="nta:107787940"/>
<dbReference type="OMA" id="IHPYWIN"/>
<dbReference type="OrthoDB" id="200404at2759"/>
<dbReference type="PhylomeDB" id="Q9FZL3"/>
<dbReference type="Proteomes" id="UP000084051">
    <property type="component" value="Unplaced"/>
</dbReference>
<dbReference type="GO" id="GO:0031969">
    <property type="term" value="C:chloroplast membrane"/>
    <property type="evidence" value="ECO:0007669"/>
    <property type="project" value="UniProtKB-SubCell"/>
</dbReference>
<dbReference type="GO" id="GO:0046509">
    <property type="term" value="F:1,2-diacylglycerol 3-beta-galactosyltransferase activity"/>
    <property type="evidence" value="ECO:0007669"/>
    <property type="project" value="UniProtKB-EC"/>
</dbReference>
<dbReference type="GO" id="GO:0009247">
    <property type="term" value="P:glycolipid biosynthetic process"/>
    <property type="evidence" value="ECO:0007669"/>
    <property type="project" value="InterPro"/>
</dbReference>
<dbReference type="CDD" id="cd17507">
    <property type="entry name" value="GT28_Beta-DGS-like"/>
    <property type="match status" value="1"/>
</dbReference>
<dbReference type="Gene3D" id="3.40.50.2000">
    <property type="entry name" value="Glycogen Phosphorylase B"/>
    <property type="match status" value="1"/>
</dbReference>
<dbReference type="InterPro" id="IPR009695">
    <property type="entry name" value="Diacylglyc_glucosyltr_N"/>
</dbReference>
<dbReference type="InterPro" id="IPR007235">
    <property type="entry name" value="Glyco_trans_28_C"/>
</dbReference>
<dbReference type="InterPro" id="IPR050519">
    <property type="entry name" value="Glycosyltransf_28_UgtP"/>
</dbReference>
<dbReference type="PANTHER" id="PTHR43025">
    <property type="entry name" value="MONOGALACTOSYLDIACYLGLYCEROL SYNTHASE"/>
    <property type="match status" value="1"/>
</dbReference>
<dbReference type="PANTHER" id="PTHR43025:SF3">
    <property type="entry name" value="MONOGALACTOSYLDIACYLGLYCEROL SYNTHASE 1, CHLOROPLASTIC"/>
    <property type="match status" value="1"/>
</dbReference>
<dbReference type="Pfam" id="PF04101">
    <property type="entry name" value="Glyco_tran_28_C"/>
    <property type="match status" value="1"/>
</dbReference>
<dbReference type="Pfam" id="PF06925">
    <property type="entry name" value="MGDG_synth"/>
    <property type="match status" value="1"/>
</dbReference>
<dbReference type="SUPFAM" id="SSF53756">
    <property type="entry name" value="UDP-Glycosyltransferase/glycogen phosphorylase"/>
    <property type="match status" value="1"/>
</dbReference>
<protein>
    <recommendedName>
        <fullName>Probable monogalactosyldiacylglycerol synthase, chloroplastic</fullName>
        <shortName>NtMGD1</shortName>
        <ecNumber>2.4.1.46</ecNumber>
    </recommendedName>
    <alternativeName>
        <fullName>MGDG synthase type A</fullName>
    </alternativeName>
</protein>
<comment type="function">
    <text evidence="1">Involved in the synthesis of the major structural component of photosynthetic membranes.</text>
</comment>
<comment type="catalytic activity">
    <reaction>
        <text>a 1,2-diacyl-sn-glycerol + UDP-alpha-D-galactose = a 1,2-diacyl-3-O-(beta-D-galactosyl)-sn-glycerol + UDP + H(+)</text>
        <dbReference type="Rhea" id="RHEA:14945"/>
        <dbReference type="ChEBI" id="CHEBI:15378"/>
        <dbReference type="ChEBI" id="CHEBI:17615"/>
        <dbReference type="ChEBI" id="CHEBI:17815"/>
        <dbReference type="ChEBI" id="CHEBI:58223"/>
        <dbReference type="ChEBI" id="CHEBI:66914"/>
        <dbReference type="EC" id="2.4.1.46"/>
    </reaction>
</comment>
<comment type="subcellular location">
    <subcellularLocation>
        <location evidence="3">Plastid</location>
        <location evidence="3">Chloroplast membrane</location>
    </subcellularLocation>
</comment>
<comment type="similarity">
    <text evidence="3">Belongs to the glycosyltransferase 28 family.</text>
</comment>
<sequence length="535" mass="59589">MMQHSSSVTQEPTNPFGFVSQVGSFVFNNSCSRVSKSNFTLDSYSNLLSNYLYFDCNVKKDSLNHKNKPKASPLLSLSISNKSASSFSRVLFQFNKAIRFHCEKIPLGFASVGVNCGESNGVREEGSVVENEGIPDNGVESEPPKKVLILMSDTGGGHRASAEAIRSAFNEEFGDKYQVFITDLWTEHTPWPFNQLPRSYNFLVKHGSLWRMTYYATAPRLVHQTNFAATSTFIAREVAKGLMKYQPDIIISVHPLMQHVPLRILRSKGLLKKIIFTTVITDLSTCHPTWFHKLVTRCYCPSEEVAKRALRAGLKPYQLKVYGLPVRPSFVKPVPPKVELRKELGMEEHLPAVLLMGGGEGMGPIEATARALGDALYDEIHGEPIGQVLVICGRNKKLFNRLTSVQWKIPVQVKGFVTKMEECMGACDCIITKAGPGTIAEAVIRGLPIILNDYIAGQEAGNVPYVIENGCGKFSKSPKKIANIVAQWFGPRQDELRIMSQNALRLARPDAVFKIVHDMHELVRQRNFEPQCCPA</sequence>
<proteinExistence type="evidence at transcript level"/>
<keyword id="KW-0150">Chloroplast</keyword>
<keyword id="KW-0328">Glycosyltransferase</keyword>
<keyword id="KW-0472">Membrane</keyword>
<keyword id="KW-0934">Plastid</keyword>
<keyword id="KW-1185">Reference proteome</keyword>
<keyword id="KW-0808">Transferase</keyword>
<keyword id="KW-0809">Transit peptide</keyword>
<reference key="1">
    <citation type="journal article" date="2001" name="Proc. Natl. Acad. Sci. U.S.A.">
        <title>Two types of MGDG synthase genes, found widely in both 16:3 and 18:3 plants, differentially mediate galactolipid syntheses in photosynthetic and nonphotosynthetic tissues in Arabidopsis thaliana.</title>
        <authorList>
            <person name="Awai K."/>
            <person name="Marechal E."/>
            <person name="Block M.A."/>
            <person name="Brun D."/>
            <person name="Masuda T."/>
            <person name="Shimada H."/>
            <person name="Takamiya K."/>
            <person name="Ohta H."/>
            <person name="Joyard J."/>
        </authorList>
    </citation>
    <scope>NUCLEOTIDE SEQUENCE [MRNA]</scope>
</reference>
<gene>
    <name type="primary">MGD A</name>
</gene>
<accession>Q9FZL3</accession>
<organism>
    <name type="scientific">Nicotiana tabacum</name>
    <name type="common">Common tobacco</name>
    <dbReference type="NCBI Taxonomy" id="4097"/>
    <lineage>
        <taxon>Eukaryota</taxon>
        <taxon>Viridiplantae</taxon>
        <taxon>Streptophyta</taxon>
        <taxon>Embryophyta</taxon>
        <taxon>Tracheophyta</taxon>
        <taxon>Spermatophyta</taxon>
        <taxon>Magnoliopsida</taxon>
        <taxon>eudicotyledons</taxon>
        <taxon>Gunneridae</taxon>
        <taxon>Pentapetalae</taxon>
        <taxon>asterids</taxon>
        <taxon>lamiids</taxon>
        <taxon>Solanales</taxon>
        <taxon>Solanaceae</taxon>
        <taxon>Nicotianoideae</taxon>
        <taxon>Nicotianeae</taxon>
        <taxon>Nicotiana</taxon>
    </lineage>
</organism>